<gene>
    <name evidence="9 11" type="primary">Cyren</name>
    <name evidence="8" type="synonym">Mri</name>
</gene>
<organism>
    <name type="scientific">Mus musculus</name>
    <name type="common">Mouse</name>
    <dbReference type="NCBI Taxonomy" id="10090"/>
    <lineage>
        <taxon>Eukaryota</taxon>
        <taxon>Metazoa</taxon>
        <taxon>Chordata</taxon>
        <taxon>Craniata</taxon>
        <taxon>Vertebrata</taxon>
        <taxon>Euteleostomi</taxon>
        <taxon>Mammalia</taxon>
        <taxon>Eutheria</taxon>
        <taxon>Euarchontoglires</taxon>
        <taxon>Glires</taxon>
        <taxon>Rodentia</taxon>
        <taxon>Myomorpha</taxon>
        <taxon>Muroidea</taxon>
        <taxon>Muridae</taxon>
        <taxon>Murinae</taxon>
        <taxon>Mus</taxon>
        <taxon>Mus</taxon>
    </lineage>
</organism>
<feature type="chain" id="PRO_0000320949" description="Cell cycle regulator of non-homologous end joining">
    <location>
        <begin position="1"/>
        <end position="157"/>
    </location>
</feature>
<feature type="region of interest" description="Disordered" evidence="3">
    <location>
        <begin position="80"/>
        <end position="148"/>
    </location>
</feature>
<feature type="short sequence motif" description="KBM" evidence="2">
    <location>
        <begin position="1"/>
        <end position="21"/>
    </location>
</feature>
<feature type="short sequence motif" description="XLM" evidence="2">
    <location>
        <begin position="147"/>
        <end position="157"/>
    </location>
</feature>
<feature type="compositionally biased region" description="Basic and acidic residues" evidence="3">
    <location>
        <begin position="80"/>
        <end position="91"/>
    </location>
</feature>
<feature type="compositionally biased region" description="Low complexity" evidence="3">
    <location>
        <begin position="96"/>
        <end position="106"/>
    </location>
</feature>
<feature type="modified residue" description="N-acetylmethionine" evidence="2">
    <location>
        <position position="1"/>
    </location>
</feature>
<feature type="splice variant" id="VSP_031769" description="In isoform 2." evidence="7">
    <original>E</original>
    <variation>EVTSVLSLVSPMPGDSSWVGTSTGPPLL</variation>
    <location>
        <position position="74"/>
    </location>
</feature>
<feature type="sequence conflict" description="In Ref. 2; AAH29235." evidence="10" ref="2">
    <original>S</original>
    <variation>I</variation>
    <location>
        <position position="137"/>
    </location>
</feature>
<feature type="sequence conflict" description="In Ref. 2; AAH29235." evidence="10" ref="2">
    <location>
        <position position="142"/>
    </location>
</feature>
<reference key="1">
    <citation type="journal article" date="2005" name="Science">
        <title>The transcriptional landscape of the mammalian genome.</title>
        <authorList>
            <person name="Carninci P."/>
            <person name="Kasukawa T."/>
            <person name="Katayama S."/>
            <person name="Gough J."/>
            <person name="Frith M.C."/>
            <person name="Maeda N."/>
            <person name="Oyama R."/>
            <person name="Ravasi T."/>
            <person name="Lenhard B."/>
            <person name="Wells C."/>
            <person name="Kodzius R."/>
            <person name="Shimokawa K."/>
            <person name="Bajic V.B."/>
            <person name="Brenner S.E."/>
            <person name="Batalov S."/>
            <person name="Forrest A.R."/>
            <person name="Zavolan M."/>
            <person name="Davis M.J."/>
            <person name="Wilming L.G."/>
            <person name="Aidinis V."/>
            <person name="Allen J.E."/>
            <person name="Ambesi-Impiombato A."/>
            <person name="Apweiler R."/>
            <person name="Aturaliya R.N."/>
            <person name="Bailey T.L."/>
            <person name="Bansal M."/>
            <person name="Baxter L."/>
            <person name="Beisel K.W."/>
            <person name="Bersano T."/>
            <person name="Bono H."/>
            <person name="Chalk A.M."/>
            <person name="Chiu K.P."/>
            <person name="Choudhary V."/>
            <person name="Christoffels A."/>
            <person name="Clutterbuck D.R."/>
            <person name="Crowe M.L."/>
            <person name="Dalla E."/>
            <person name="Dalrymple B.P."/>
            <person name="de Bono B."/>
            <person name="Della Gatta G."/>
            <person name="di Bernardo D."/>
            <person name="Down T."/>
            <person name="Engstrom P."/>
            <person name="Fagiolini M."/>
            <person name="Faulkner G."/>
            <person name="Fletcher C.F."/>
            <person name="Fukushima T."/>
            <person name="Furuno M."/>
            <person name="Futaki S."/>
            <person name="Gariboldi M."/>
            <person name="Georgii-Hemming P."/>
            <person name="Gingeras T.R."/>
            <person name="Gojobori T."/>
            <person name="Green R.E."/>
            <person name="Gustincich S."/>
            <person name="Harbers M."/>
            <person name="Hayashi Y."/>
            <person name="Hensch T.K."/>
            <person name="Hirokawa N."/>
            <person name="Hill D."/>
            <person name="Huminiecki L."/>
            <person name="Iacono M."/>
            <person name="Ikeo K."/>
            <person name="Iwama A."/>
            <person name="Ishikawa T."/>
            <person name="Jakt M."/>
            <person name="Kanapin A."/>
            <person name="Katoh M."/>
            <person name="Kawasawa Y."/>
            <person name="Kelso J."/>
            <person name="Kitamura H."/>
            <person name="Kitano H."/>
            <person name="Kollias G."/>
            <person name="Krishnan S.P."/>
            <person name="Kruger A."/>
            <person name="Kummerfeld S.K."/>
            <person name="Kurochkin I.V."/>
            <person name="Lareau L.F."/>
            <person name="Lazarevic D."/>
            <person name="Lipovich L."/>
            <person name="Liu J."/>
            <person name="Liuni S."/>
            <person name="McWilliam S."/>
            <person name="Madan Babu M."/>
            <person name="Madera M."/>
            <person name="Marchionni L."/>
            <person name="Matsuda H."/>
            <person name="Matsuzawa S."/>
            <person name="Miki H."/>
            <person name="Mignone F."/>
            <person name="Miyake S."/>
            <person name="Morris K."/>
            <person name="Mottagui-Tabar S."/>
            <person name="Mulder N."/>
            <person name="Nakano N."/>
            <person name="Nakauchi H."/>
            <person name="Ng P."/>
            <person name="Nilsson R."/>
            <person name="Nishiguchi S."/>
            <person name="Nishikawa S."/>
            <person name="Nori F."/>
            <person name="Ohara O."/>
            <person name="Okazaki Y."/>
            <person name="Orlando V."/>
            <person name="Pang K.C."/>
            <person name="Pavan W.J."/>
            <person name="Pavesi G."/>
            <person name="Pesole G."/>
            <person name="Petrovsky N."/>
            <person name="Piazza S."/>
            <person name="Reed J."/>
            <person name="Reid J.F."/>
            <person name="Ring B.Z."/>
            <person name="Ringwald M."/>
            <person name="Rost B."/>
            <person name="Ruan Y."/>
            <person name="Salzberg S.L."/>
            <person name="Sandelin A."/>
            <person name="Schneider C."/>
            <person name="Schoenbach C."/>
            <person name="Sekiguchi K."/>
            <person name="Semple C.A."/>
            <person name="Seno S."/>
            <person name="Sessa L."/>
            <person name="Sheng Y."/>
            <person name="Shibata Y."/>
            <person name="Shimada H."/>
            <person name="Shimada K."/>
            <person name="Silva D."/>
            <person name="Sinclair B."/>
            <person name="Sperling S."/>
            <person name="Stupka E."/>
            <person name="Sugiura K."/>
            <person name="Sultana R."/>
            <person name="Takenaka Y."/>
            <person name="Taki K."/>
            <person name="Tammoja K."/>
            <person name="Tan S.L."/>
            <person name="Tang S."/>
            <person name="Taylor M.S."/>
            <person name="Tegner J."/>
            <person name="Teichmann S.A."/>
            <person name="Ueda H.R."/>
            <person name="van Nimwegen E."/>
            <person name="Verardo R."/>
            <person name="Wei C.L."/>
            <person name="Yagi K."/>
            <person name="Yamanishi H."/>
            <person name="Zabarovsky E."/>
            <person name="Zhu S."/>
            <person name="Zimmer A."/>
            <person name="Hide W."/>
            <person name="Bult C."/>
            <person name="Grimmond S.M."/>
            <person name="Teasdale R.D."/>
            <person name="Liu E.T."/>
            <person name="Brusic V."/>
            <person name="Quackenbush J."/>
            <person name="Wahlestedt C."/>
            <person name="Mattick J.S."/>
            <person name="Hume D.A."/>
            <person name="Kai C."/>
            <person name="Sasaki D."/>
            <person name="Tomaru Y."/>
            <person name="Fukuda S."/>
            <person name="Kanamori-Katayama M."/>
            <person name="Suzuki M."/>
            <person name="Aoki J."/>
            <person name="Arakawa T."/>
            <person name="Iida J."/>
            <person name="Imamura K."/>
            <person name="Itoh M."/>
            <person name="Kato T."/>
            <person name="Kawaji H."/>
            <person name="Kawagashira N."/>
            <person name="Kawashima T."/>
            <person name="Kojima M."/>
            <person name="Kondo S."/>
            <person name="Konno H."/>
            <person name="Nakano K."/>
            <person name="Ninomiya N."/>
            <person name="Nishio T."/>
            <person name="Okada M."/>
            <person name="Plessy C."/>
            <person name="Shibata K."/>
            <person name="Shiraki T."/>
            <person name="Suzuki S."/>
            <person name="Tagami M."/>
            <person name="Waki K."/>
            <person name="Watahiki A."/>
            <person name="Okamura-Oho Y."/>
            <person name="Suzuki H."/>
            <person name="Kawai J."/>
            <person name="Hayashizaki Y."/>
        </authorList>
    </citation>
    <scope>NUCLEOTIDE SEQUENCE [LARGE SCALE MRNA] (ISOFORM 1)</scope>
    <source>
        <strain>C57BL/6J</strain>
        <strain>NOD</strain>
        <tissue>Thymus</tissue>
    </source>
</reference>
<reference key="2">
    <citation type="journal article" date="2004" name="Genome Res.">
        <title>The status, quality, and expansion of the NIH full-length cDNA project: the Mammalian Gene Collection (MGC).</title>
        <authorList>
            <consortium name="The MGC Project Team"/>
        </authorList>
    </citation>
    <scope>NUCLEOTIDE SEQUENCE [LARGE SCALE MRNA] (ISOFORM 2)</scope>
    <source>
        <strain>FVB/N</strain>
        <tissue>Salivary gland</tissue>
    </source>
</reference>
<reference key="3">
    <citation type="journal article" date="2018" name="Mol. Cell">
        <title>MRI is a DNA damage response adaptor during classical non-homologous end joining.</title>
        <authorList>
            <person name="Hung P.J."/>
            <person name="Johnson B."/>
            <person name="Chen B.R."/>
            <person name="Byrum A.K."/>
            <person name="Bredemeyer A.L."/>
            <person name="Yewdell W.T."/>
            <person name="Johnson T.E."/>
            <person name="Lee B.J."/>
            <person name="Deivasigamani S."/>
            <person name="Hindi I."/>
            <person name="Amatya P."/>
            <person name="Gross M.L."/>
            <person name="Paull T.T."/>
            <person name="Pisapia D.J."/>
            <person name="Chaudhuri J."/>
            <person name="Petrini J.J.H."/>
            <person name="Mosammaparast N."/>
            <person name="Amarasinghe G.K."/>
            <person name="Zha S."/>
            <person name="Tyler J.K."/>
            <person name="Sleckman B.P."/>
        </authorList>
    </citation>
    <scope>FUNCTION</scope>
    <scope>SUBCELLULAR LOCATION</scope>
    <scope>MOTIFS KBM AND KLM</scope>
    <scope>DOMAIN</scope>
    <scope>INTERACTION WITH XRCC5; XRCC6; TRIM28/KAP1; ATM; MRE11; NBN AND RAD50</scope>
    <scope>DISRUPTION PHENOTYPE</scope>
</reference>
<reference key="4">
    <citation type="journal article" date="2019" name="Biomolecules">
        <title>Generation of a Mouse Model Lacking the Non-Homologous End-Joining Factor Mri/Cyren.</title>
        <authorList>
            <person name="Castaneda-Zegarra S."/>
            <person name="Huse C."/>
            <person name="Roesand O."/>
            <person name="Sarno A."/>
            <person name="Xing M."/>
            <person name="Gago-Fuentes R."/>
            <person name="Zhang Q."/>
            <person name="Alirezaylavasani A."/>
            <person name="Werner J."/>
            <person name="Ji P."/>
            <person name="Liabakk N.B."/>
            <person name="Wang W."/>
            <person name="Bjoeraas M."/>
            <person name="Oksenych V."/>
        </authorList>
    </citation>
    <scope>FUNCTION</scope>
    <scope>DISRUPTION PHENOTYPE</scope>
</reference>
<reference key="5">
    <citation type="journal article" date="2020" name="Cell Res.">
        <title>ERCC6L2 promotes DNA orientation-specific recombination in mammalian cells.</title>
        <authorList>
            <person name="Liu X."/>
            <person name="Liu T."/>
            <person name="Shang Y."/>
            <person name="Dai P."/>
            <person name="Zhang W."/>
            <person name="Lee B.J."/>
            <person name="Huang M."/>
            <person name="Yang D."/>
            <person name="Wu Q."/>
            <person name="Liu L.D."/>
            <person name="Zheng X."/>
            <person name="Zhou B.O."/>
            <person name="Dong J."/>
            <person name="Yeap L.S."/>
            <person name="Hu J."/>
            <person name="Xiao T."/>
            <person name="Zha S."/>
            <person name="Casellas R."/>
            <person name="Liu X.S."/>
            <person name="Meng F.L."/>
        </authorList>
    </citation>
    <scope>INTERACTION WITH ERCC6L2</scope>
</reference>
<comment type="function">
    <text evidence="1 2 4 5">Cell-cycle-specific regulator of classical non-homologous end joining (NHEJ) of DNA double-strand break (DSB) repair, which can act both as an activator or inhibitor of NHEJ, depending on the cell cycle phase (PubMed:30017584). Acts as a regulator of DNA repair pathway choice by specifically inhibiting classical NHEJ during the S and G2 phases, thereby promoting error-free repair by homologous recombination during cell cycle phases when sister chromatids are present (By similarity). Preferentially protects single-stranded overhangs at break sites by inhibiting classical NHEJ, thereby creating a local environment that favors homologous recombination (By similarity). Acts via interaction with XRCC5/Ku80 and XRCC6/Ku70 (By similarity). In contrast, acts as an activator of NHEJ during G1 phase of the cell cycle: promotes classical NHEJ in G1 phase cells via multivalent interactions that increase the affinity of DNA damage response proteins for DSB-associated chromatin (PubMed:30017584). Also involved in immunoglobulin V(D)J recombination (PubMed:30017584, PubMed:31795137). May also act as an indirect regulator of proteasome (By similarity).</text>
</comment>
<comment type="subunit">
    <text evidence="2 4 6">Interacts (via KBM motif) with XRCC5/Ku80 and XRCC6/Ku70 heterodimer (PubMed:30017584). Interacts (via XLF motif) with TRIM28/KAP1, ATM, MRE11, NBN and RAD50 (PubMed:30017584). Interacts with splicing factor SF3B1 (By similarity). Interacts with ERCC6L2; this interaction is DNA independent (PubMed:32355287).</text>
</comment>
<comment type="subcellular location">
    <subcellularLocation>
        <location evidence="2">Cytoplasm</location>
    </subcellularLocation>
    <subcellularLocation>
        <location evidence="2">Nucleus</location>
    </subcellularLocation>
    <subcellularLocation>
        <location evidence="4">Chromosome</location>
    </subcellularLocation>
    <text evidence="2 4">Nuclear localization may depend upon interaction with XRCC5/Ku80 and XRCC6/Ku70 heterodimer (By similarity). Localizes to DNA damage sites (PubMed:30017584).</text>
</comment>
<comment type="alternative products">
    <event type="alternative splicing"/>
    <isoform>
        <id>Q8BHZ5-1</id>
        <name>1</name>
        <sequence type="displayed"/>
    </isoform>
    <isoform>
        <id>Q8BHZ5-2</id>
        <name>2</name>
        <sequence type="described" ref="VSP_031769"/>
    </isoform>
</comment>
<comment type="domain">
    <text evidence="4">The KBM (Ku-binding motif) mediates interaction with XRCC5/Ku80 and XRCC6/Ku70 and recruitment to DNA damage sites.</text>
</comment>
<comment type="domain">
    <text evidence="4">The XLM (XLF-like motif) mediates interaction with DNA damage response proteins TRIM28/KAP1, ATM and members of the MRN complex (MRE11, NBN and RAD50).</text>
</comment>
<comment type="disruption phenotype">
    <text evidence="4 5">No visible phenotype in normal conditions: mice are fertile, do not show any gross abnormalities and do not develop spontaneous cancers (PubMed:30017584, PubMed:31795137). Mice have normal numbers of B- and T-cells, but show defects in class switch recombination in primary B-cells (PubMed:30017584, PubMed:31795137). Mice lacking both Cyren and Nhej1/Xlf show embryonic lethality caused by severe defects in classical non-homologous end joining (NHEJ) (PubMed:30017584).</text>
</comment>
<proteinExistence type="evidence at protein level"/>
<evidence type="ECO:0000250" key="1">
    <source>
        <dbReference type="UniProtKB" id="Q09HN1"/>
    </source>
</evidence>
<evidence type="ECO:0000250" key="2">
    <source>
        <dbReference type="UniProtKB" id="Q9BWK5"/>
    </source>
</evidence>
<evidence type="ECO:0000256" key="3">
    <source>
        <dbReference type="SAM" id="MobiDB-lite"/>
    </source>
</evidence>
<evidence type="ECO:0000269" key="4">
    <source>
    </source>
</evidence>
<evidence type="ECO:0000269" key="5">
    <source>
    </source>
</evidence>
<evidence type="ECO:0000269" key="6">
    <source>
    </source>
</evidence>
<evidence type="ECO:0000303" key="7">
    <source>
    </source>
</evidence>
<evidence type="ECO:0000303" key="8">
    <source>
    </source>
</evidence>
<evidence type="ECO:0000303" key="9">
    <source>
    </source>
</evidence>
<evidence type="ECO:0000305" key="10"/>
<evidence type="ECO:0000312" key="11">
    <source>
        <dbReference type="MGI" id="MGI:1925662"/>
    </source>
</evidence>
<name>CYREN_MOUSE</name>
<accession>Q8BHZ5</accession>
<accession>Q8K0Y5</accession>
<sequence length="157" mass="17287">METLKSKTKTRVLPSWMTAPVDERKVVSVKTATRKQTAAWAQRVGAATRAPATETVYCMNEAEMVDVALGILIEGRKQEKPWEQRSLEATDKLQLSPPCSSSPGSSSEEEDSRISSLAPGLSPPRGPEASDSPCSRSPEEEKEEEDALKYVREIFFS</sequence>
<protein>
    <recommendedName>
        <fullName evidence="9">Cell cycle regulator of non-homologous end joining</fullName>
        <shortName evidence="9">Cell cycle regulator of NHEJ</shortName>
    </recommendedName>
    <alternativeName>
        <fullName evidence="8">Modulator of retrovirus infection homolog</fullName>
    </alternativeName>
</protein>
<keyword id="KW-0007">Acetylation</keyword>
<keyword id="KW-0025">Alternative splicing</keyword>
<keyword id="KW-0158">Chromosome</keyword>
<keyword id="KW-0963">Cytoplasm</keyword>
<keyword id="KW-0227">DNA damage</keyword>
<keyword id="KW-0234">DNA repair</keyword>
<keyword id="KW-0539">Nucleus</keyword>
<keyword id="KW-1185">Reference proteome</keyword>
<dbReference type="EMBL" id="AK042380">
    <property type="protein sequence ID" value="BAC31243.1"/>
    <property type="molecule type" value="mRNA"/>
</dbReference>
<dbReference type="EMBL" id="AK170119">
    <property type="protein sequence ID" value="BAE41576.1"/>
    <property type="molecule type" value="mRNA"/>
</dbReference>
<dbReference type="EMBL" id="BC029235">
    <property type="protein sequence ID" value="AAH29235.1"/>
    <property type="molecule type" value="mRNA"/>
</dbReference>
<dbReference type="CCDS" id="CCDS19997.1">
    <molecule id="Q8BHZ5-1"/>
</dbReference>
<dbReference type="CCDS" id="CCDS85030.1">
    <molecule id="Q8BHZ5-2"/>
</dbReference>
<dbReference type="RefSeq" id="NP_001129083.1">
    <molecule id="Q8BHZ5-1"/>
    <property type="nucleotide sequence ID" value="NM_001135611.1"/>
</dbReference>
<dbReference type="RefSeq" id="NP_001334030.1">
    <molecule id="Q8BHZ5-2"/>
    <property type="nucleotide sequence ID" value="NM_001347101.1"/>
</dbReference>
<dbReference type="RefSeq" id="NP_954596.1">
    <molecule id="Q8BHZ5-1"/>
    <property type="nucleotide sequence ID" value="NM_199145.2"/>
</dbReference>
<dbReference type="RefSeq" id="XP_030111536.1">
    <molecule id="Q8BHZ5-1"/>
    <property type="nucleotide sequence ID" value="XM_030255676.2"/>
</dbReference>
<dbReference type="FunCoup" id="Q8BHZ5">
    <property type="interactions" value="1828"/>
</dbReference>
<dbReference type="STRING" id="10090.ENSMUSP00000110658"/>
<dbReference type="PhosphoSitePlus" id="Q8BHZ5"/>
<dbReference type="PaxDb" id="10090-ENSMUSP00000053349"/>
<dbReference type="ProteomicsDB" id="277937">
    <molecule id="Q8BHZ5-1"/>
</dbReference>
<dbReference type="ProteomicsDB" id="277938">
    <molecule id="Q8BHZ5-2"/>
</dbReference>
<dbReference type="Antibodypedia" id="18116">
    <property type="antibodies" value="50 antibodies from 17 providers"/>
</dbReference>
<dbReference type="Ensembl" id="ENSMUST00000055097.11">
    <molecule id="Q8BHZ5-1"/>
    <property type="protein sequence ID" value="ENSMUSP00000053349.5"/>
    <property type="gene ID" value="ENSMUSG00000046806.14"/>
</dbReference>
<dbReference type="Ensembl" id="ENSMUST00000115006.2">
    <molecule id="Q8BHZ5-2"/>
    <property type="protein sequence ID" value="ENSMUSP00000110658.2"/>
    <property type="gene ID" value="ENSMUSG00000046806.14"/>
</dbReference>
<dbReference type="Ensembl" id="ENSMUST00000115007.9">
    <molecule id="Q8BHZ5-1"/>
    <property type="protein sequence ID" value="ENSMUSP00000110659.3"/>
    <property type="gene ID" value="ENSMUSG00000046806.14"/>
</dbReference>
<dbReference type="GeneID" id="78412"/>
<dbReference type="KEGG" id="mmu:78412"/>
<dbReference type="UCSC" id="uc009bhv.1">
    <molecule id="Q8BHZ5-1"/>
    <property type="organism name" value="mouse"/>
</dbReference>
<dbReference type="UCSC" id="uc009bhx.2">
    <molecule id="Q8BHZ5-2"/>
    <property type="organism name" value="mouse"/>
</dbReference>
<dbReference type="AGR" id="MGI:1925662"/>
<dbReference type="CTD" id="78996"/>
<dbReference type="MGI" id="MGI:1925662">
    <property type="gene designation" value="Cyren"/>
</dbReference>
<dbReference type="VEuPathDB" id="HostDB:ENSMUSG00000046806"/>
<dbReference type="eggNOG" id="ENOG502SEX2">
    <property type="taxonomic scope" value="Eukaryota"/>
</dbReference>
<dbReference type="GeneTree" id="ENSGT00390000013192"/>
<dbReference type="HOGENOM" id="CLU_126072_0_0_1"/>
<dbReference type="InParanoid" id="Q8BHZ5"/>
<dbReference type="OMA" id="VLPTWMT"/>
<dbReference type="PhylomeDB" id="Q8BHZ5"/>
<dbReference type="TreeFam" id="TF336925"/>
<dbReference type="BioGRID-ORCS" id="78412">
    <property type="hits" value="1 hit in 76 CRISPR screens"/>
</dbReference>
<dbReference type="PRO" id="PR:Q8BHZ5"/>
<dbReference type="Proteomes" id="UP000000589">
    <property type="component" value="Chromosome 6"/>
</dbReference>
<dbReference type="RNAct" id="Q8BHZ5">
    <property type="molecule type" value="protein"/>
</dbReference>
<dbReference type="Bgee" id="ENSMUSG00000046806">
    <property type="expression patterns" value="Expressed in granulocyte and 64 other cell types or tissues"/>
</dbReference>
<dbReference type="ExpressionAtlas" id="Q8BHZ5">
    <property type="expression patterns" value="baseline and differential"/>
</dbReference>
<dbReference type="GO" id="GO:0005737">
    <property type="term" value="C:cytoplasm"/>
    <property type="evidence" value="ECO:0000250"/>
    <property type="project" value="UniProtKB"/>
</dbReference>
<dbReference type="GO" id="GO:1990391">
    <property type="term" value="C:DNA repair complex"/>
    <property type="evidence" value="ECO:0000353"/>
    <property type="project" value="DisProt"/>
</dbReference>
<dbReference type="GO" id="GO:0005634">
    <property type="term" value="C:nucleus"/>
    <property type="evidence" value="ECO:0000250"/>
    <property type="project" value="UniProtKB"/>
</dbReference>
<dbReference type="GO" id="GO:0035861">
    <property type="term" value="C:site of double-strand break"/>
    <property type="evidence" value="ECO:0000314"/>
    <property type="project" value="UniProtKB"/>
</dbReference>
<dbReference type="GO" id="GO:0003684">
    <property type="term" value="F:damaged DNA binding"/>
    <property type="evidence" value="ECO:0000314"/>
    <property type="project" value="DisProt"/>
</dbReference>
<dbReference type="GO" id="GO:0060090">
    <property type="term" value="F:molecular adaptor activity"/>
    <property type="evidence" value="ECO:0000269"/>
    <property type="project" value="DisProt"/>
</dbReference>
<dbReference type="GO" id="GO:0006974">
    <property type="term" value="P:DNA damage response"/>
    <property type="evidence" value="ECO:0000314"/>
    <property type="project" value="DisProt"/>
</dbReference>
<dbReference type="GO" id="GO:0006303">
    <property type="term" value="P:double-strand break repair via nonhomologous end joining"/>
    <property type="evidence" value="ECO:0000314"/>
    <property type="project" value="DisProt"/>
</dbReference>
<dbReference type="GO" id="GO:0033152">
    <property type="term" value="P:immunoglobulin V(D)J recombination"/>
    <property type="evidence" value="ECO:0000315"/>
    <property type="project" value="UniProtKB"/>
</dbReference>
<dbReference type="GO" id="GO:2001033">
    <property type="term" value="P:negative regulation of double-strand break repair via nonhomologous end joining"/>
    <property type="evidence" value="ECO:0000250"/>
    <property type="project" value="UniProtKB"/>
</dbReference>
<dbReference type="GO" id="GO:2001034">
    <property type="term" value="P:positive regulation of double-strand break repair via nonhomologous end joining"/>
    <property type="evidence" value="ECO:0000315"/>
    <property type="project" value="DisProt"/>
</dbReference>
<dbReference type="GO" id="GO:0051260">
    <property type="term" value="P:protein homooligomerization"/>
    <property type="evidence" value="ECO:0000269"/>
    <property type="project" value="DisProt"/>
</dbReference>
<dbReference type="GO" id="GO:1990166">
    <property type="term" value="P:protein localization to site of double-strand break"/>
    <property type="evidence" value="ECO:0000314"/>
    <property type="project" value="DisProt"/>
</dbReference>
<dbReference type="DisProt" id="DP01754"/>
<dbReference type="InterPro" id="IPR028278">
    <property type="entry name" value="MRI"/>
</dbReference>
<dbReference type="PANTHER" id="PTHR14566">
    <property type="entry name" value="CELL CYCLE REGULATOR OF NON-HOMOLOGOUS END JOINING"/>
    <property type="match status" value="1"/>
</dbReference>
<dbReference type="PANTHER" id="PTHR14566:SF0">
    <property type="entry name" value="CELL CYCLE REGULATOR OF NON-HOMOLOGOUS END JOINING"/>
    <property type="match status" value="1"/>
</dbReference>
<dbReference type="Pfam" id="PF15325">
    <property type="entry name" value="MRI"/>
    <property type="match status" value="1"/>
</dbReference>